<feature type="propeptide" id="PRO_0000009409" evidence="1">
    <location>
        <begin position="1"/>
        <end position="8"/>
    </location>
</feature>
<feature type="chain" id="PRO_0000009410" description="Flagellin B1">
    <location>
        <begin position="9"/>
        <end position="294"/>
    </location>
</feature>
<proteinExistence type="inferred from homology"/>
<keyword id="KW-0974">Archaeal flagellum</keyword>
<keyword id="KW-1185">Reference proteome</keyword>
<reference key="1">
    <citation type="journal article" date="1999" name="FEMS Microbiol. Lett.">
        <title>Sequence and transcriptional studies of five clustered flagellin genes from hyperthermophilic archaeon Pyrococcus kodakaraensis KOD1.</title>
        <authorList>
            <person name="Nagahisa K."/>
            <person name="Ezaki S."/>
            <person name="Fujiwara S."/>
            <person name="Imanaka T."/>
            <person name="Takagi M."/>
        </authorList>
    </citation>
    <scope>NUCLEOTIDE SEQUENCE [GENOMIC DNA]</scope>
    <source>
        <strain>ATCC BAA-918 / JCM 12380 / KOD1</strain>
    </source>
</reference>
<reference key="2">
    <citation type="journal article" date="2005" name="Genome Res.">
        <title>Complete genome sequence of the hyperthermophilic archaeon Thermococcus kodakaraensis KOD1 and comparison with Pyrococcus genomes.</title>
        <authorList>
            <person name="Fukui T."/>
            <person name="Atomi H."/>
            <person name="Kanai T."/>
            <person name="Matsumi R."/>
            <person name="Fujiwara S."/>
            <person name="Imanaka T."/>
        </authorList>
    </citation>
    <scope>NUCLEOTIDE SEQUENCE [LARGE SCALE GENOMIC DNA]</scope>
    <source>
        <strain>ATCC BAA-918 / JCM 12380 / KOD1</strain>
    </source>
</reference>
<sequence>MKTRTRKGAVGIGTLIVFIAMVLVAAVAAAVLINTSGYLQQKSQATGRETTQEVASGIKVERVVGKTDLPYTNIGSDSTELDYIRQLAIYVSPNAGSSGIDLSNTKVILSNGEKEAVLKYAGGPDDDYDAFTKGVQNDIFDLYFKYSSDGTNWNNEHSGLAAWKNLYYTGTNHDPAKNFGIIVIQDADNSLTEDYPTLNKGDLVVLTVLVGSLEEYTGNPSNDDNAVYETGGAKYDYIDVNGNSDTTDTIQGVFGEGIPAGTKITGEVVPEFGAPGVIEFTTPSTYTEAVMELQ</sequence>
<accession>Q9V2X1</accession>
<dbReference type="EMBL" id="AB018434">
    <property type="protein sequence ID" value="BAA84105.1"/>
    <property type="molecule type" value="Genomic_DNA"/>
</dbReference>
<dbReference type="EMBL" id="AP006878">
    <property type="protein sequence ID" value="BAD84227.1"/>
    <property type="molecule type" value="Genomic_DNA"/>
</dbReference>
<dbReference type="RefSeq" id="WP_011248993.1">
    <property type="nucleotide sequence ID" value="NC_006624.1"/>
</dbReference>
<dbReference type="SMR" id="Q9V2X1"/>
<dbReference type="FunCoup" id="Q9V2X1">
    <property type="interactions" value="2"/>
</dbReference>
<dbReference type="IntAct" id="Q9V2X1">
    <property type="interactions" value="1"/>
</dbReference>
<dbReference type="MINT" id="Q9V2X1"/>
<dbReference type="STRING" id="69014.TK0038"/>
<dbReference type="EnsemblBacteria" id="BAD84227">
    <property type="protein sequence ID" value="BAD84227"/>
    <property type="gene ID" value="TK0038"/>
</dbReference>
<dbReference type="GeneID" id="78446539"/>
<dbReference type="KEGG" id="tko:TK0038"/>
<dbReference type="PATRIC" id="fig|69014.16.peg.38"/>
<dbReference type="eggNOG" id="arCOG01829">
    <property type="taxonomic scope" value="Archaea"/>
</dbReference>
<dbReference type="HOGENOM" id="CLU_051124_0_0_2"/>
<dbReference type="InParanoid" id="Q9V2X1"/>
<dbReference type="OrthoDB" id="102632at2157"/>
<dbReference type="PhylomeDB" id="Q9V2X1"/>
<dbReference type="Proteomes" id="UP000000536">
    <property type="component" value="Chromosome"/>
</dbReference>
<dbReference type="GO" id="GO:0097589">
    <property type="term" value="C:archaeal-type flagellum"/>
    <property type="evidence" value="ECO:0007669"/>
    <property type="project" value="UniProtKB-SubCell"/>
</dbReference>
<dbReference type="GO" id="GO:0005198">
    <property type="term" value="F:structural molecule activity"/>
    <property type="evidence" value="ECO:0007669"/>
    <property type="project" value="InterPro"/>
</dbReference>
<dbReference type="GO" id="GO:0097588">
    <property type="term" value="P:archaeal or bacterial-type flagellum-dependent cell motility"/>
    <property type="evidence" value="ECO:0007669"/>
    <property type="project" value="InterPro"/>
</dbReference>
<dbReference type="InterPro" id="IPR013373">
    <property type="entry name" value="Flagellin/pilin_N_arc"/>
</dbReference>
<dbReference type="InterPro" id="IPR002774">
    <property type="entry name" value="Flagellin_arc"/>
</dbReference>
<dbReference type="NCBIfam" id="TIGR02537">
    <property type="entry name" value="arch_flag_Nterm"/>
    <property type="match status" value="1"/>
</dbReference>
<dbReference type="NCBIfam" id="NF006325">
    <property type="entry name" value="PRK08541.1"/>
    <property type="match status" value="1"/>
</dbReference>
<dbReference type="PANTHER" id="PTHR35903">
    <property type="entry name" value="FLAGELLIN B1"/>
    <property type="match status" value="1"/>
</dbReference>
<dbReference type="PANTHER" id="PTHR35903:SF1">
    <property type="entry name" value="FLAGELLIN B1"/>
    <property type="match status" value="1"/>
</dbReference>
<dbReference type="Pfam" id="PF01917">
    <property type="entry name" value="Arch_flagellin"/>
    <property type="match status" value="1"/>
</dbReference>
<protein>
    <recommendedName>
        <fullName>Flagellin B1</fullName>
    </recommendedName>
</protein>
<evidence type="ECO:0000250" key="1"/>
<evidence type="ECO:0000305" key="2"/>
<organism>
    <name type="scientific">Thermococcus kodakarensis (strain ATCC BAA-918 / JCM 12380 / KOD1)</name>
    <name type="common">Pyrococcus kodakaraensis (strain KOD1)</name>
    <dbReference type="NCBI Taxonomy" id="69014"/>
    <lineage>
        <taxon>Archaea</taxon>
        <taxon>Methanobacteriati</taxon>
        <taxon>Methanobacteriota</taxon>
        <taxon>Thermococci</taxon>
        <taxon>Thermococcales</taxon>
        <taxon>Thermococcaceae</taxon>
        <taxon>Thermococcus</taxon>
    </lineage>
</organism>
<comment type="function">
    <text>Flagellin is the subunit protein which polymerizes to form the filaments of archaeal flagella.</text>
</comment>
<comment type="subcellular location">
    <subcellularLocation>
        <location>Archaeal flagellum</location>
    </subcellularLocation>
</comment>
<comment type="similarity">
    <text evidence="2">Belongs to the archaeal flagellin family.</text>
</comment>
<name>FLAB1_THEKO</name>
<gene>
    <name type="primary">flaB1</name>
    <name type="ordered locus">TK0038</name>
</gene>